<comment type="function">
    <text evidence="1">Catalyzes the interconversion of beta-pyran and beta-furan forms of D-ribose.</text>
</comment>
<comment type="catalytic activity">
    <reaction evidence="1">
        <text>beta-D-ribopyranose = beta-D-ribofuranose</text>
        <dbReference type="Rhea" id="RHEA:25432"/>
        <dbReference type="ChEBI" id="CHEBI:27476"/>
        <dbReference type="ChEBI" id="CHEBI:47002"/>
        <dbReference type="EC" id="5.4.99.62"/>
    </reaction>
</comment>
<comment type="pathway">
    <text evidence="1">Carbohydrate metabolism; D-ribose degradation; D-ribose 5-phosphate from beta-D-ribopyranose: step 1/2.</text>
</comment>
<comment type="subunit">
    <text evidence="1">Homodecamer.</text>
</comment>
<comment type="subcellular location">
    <subcellularLocation>
        <location evidence="1">Cytoplasm</location>
    </subcellularLocation>
</comment>
<comment type="similarity">
    <text evidence="1">Belongs to the RbsD / FucU family. RbsD subfamily.</text>
</comment>
<organism>
    <name type="scientific">Pseudomonas putida (strain GB-1)</name>
    <dbReference type="NCBI Taxonomy" id="76869"/>
    <lineage>
        <taxon>Bacteria</taxon>
        <taxon>Pseudomonadati</taxon>
        <taxon>Pseudomonadota</taxon>
        <taxon>Gammaproteobacteria</taxon>
        <taxon>Pseudomonadales</taxon>
        <taxon>Pseudomonadaceae</taxon>
        <taxon>Pseudomonas</taxon>
    </lineage>
</organism>
<accession>B0KKS4</accession>
<sequence length="132" mass="14259">MKKTPLLNVALSRVIAGMGHGDILVIGDAGLPVPPGVEMIDLAVTPGLPDFASVLRAVLSELQVERHVLAEEMQKVVPPALVEIERLKGKLGKREWLSHENFKVLSRSARAVVRTGECQPYSNIALISGVTF</sequence>
<reference key="1">
    <citation type="submission" date="2008-01" db="EMBL/GenBank/DDBJ databases">
        <title>Complete sequence of Pseudomonas putida GB-1.</title>
        <authorList>
            <consortium name="US DOE Joint Genome Institute"/>
            <person name="Copeland A."/>
            <person name="Lucas S."/>
            <person name="Lapidus A."/>
            <person name="Barry K."/>
            <person name="Glavina del Rio T."/>
            <person name="Dalin E."/>
            <person name="Tice H."/>
            <person name="Pitluck S."/>
            <person name="Bruce D."/>
            <person name="Goodwin L."/>
            <person name="Chertkov O."/>
            <person name="Brettin T."/>
            <person name="Detter J.C."/>
            <person name="Han C."/>
            <person name="Kuske C.R."/>
            <person name="Schmutz J."/>
            <person name="Larimer F."/>
            <person name="Land M."/>
            <person name="Hauser L."/>
            <person name="Kyrpides N."/>
            <person name="Kim E."/>
            <person name="McCarthy J.K."/>
            <person name="Richardson P."/>
        </authorList>
    </citation>
    <scope>NUCLEOTIDE SEQUENCE [LARGE SCALE GENOMIC DNA]</scope>
    <source>
        <strain>GB-1</strain>
    </source>
</reference>
<evidence type="ECO:0000255" key="1">
    <source>
        <dbReference type="HAMAP-Rule" id="MF_01661"/>
    </source>
</evidence>
<keyword id="KW-0119">Carbohydrate metabolism</keyword>
<keyword id="KW-0963">Cytoplasm</keyword>
<keyword id="KW-0413">Isomerase</keyword>
<gene>
    <name evidence="1" type="primary">rbsD</name>
    <name type="ordered locus">PputGB1_3487</name>
</gene>
<proteinExistence type="inferred from homology"/>
<feature type="chain" id="PRO_0000346238" description="D-ribose pyranase">
    <location>
        <begin position="1"/>
        <end position="132"/>
    </location>
</feature>
<feature type="active site" description="Proton donor" evidence="1">
    <location>
        <position position="20"/>
    </location>
</feature>
<feature type="binding site" evidence="1">
    <location>
        <position position="28"/>
    </location>
    <ligand>
        <name>substrate</name>
    </ligand>
</feature>
<feature type="binding site" evidence="1">
    <location>
        <position position="99"/>
    </location>
    <ligand>
        <name>substrate</name>
    </ligand>
</feature>
<feature type="binding site" evidence="1">
    <location>
        <begin position="121"/>
        <end position="123"/>
    </location>
    <ligand>
        <name>substrate</name>
    </ligand>
</feature>
<protein>
    <recommendedName>
        <fullName evidence="1">D-ribose pyranase</fullName>
        <ecNumber evidence="1">5.4.99.62</ecNumber>
    </recommendedName>
</protein>
<dbReference type="EC" id="5.4.99.62" evidence="1"/>
<dbReference type="EMBL" id="CP000926">
    <property type="protein sequence ID" value="ABY99378.1"/>
    <property type="molecule type" value="Genomic_DNA"/>
</dbReference>
<dbReference type="RefSeq" id="WP_012273099.1">
    <property type="nucleotide sequence ID" value="NC_010322.1"/>
</dbReference>
<dbReference type="SMR" id="B0KKS4"/>
<dbReference type="KEGG" id="ppg:PputGB1_3487"/>
<dbReference type="eggNOG" id="COG1869">
    <property type="taxonomic scope" value="Bacteria"/>
</dbReference>
<dbReference type="HOGENOM" id="CLU_135498_0_0_6"/>
<dbReference type="UniPathway" id="UPA00916">
    <property type="reaction ID" value="UER00888"/>
</dbReference>
<dbReference type="Proteomes" id="UP000002157">
    <property type="component" value="Chromosome"/>
</dbReference>
<dbReference type="GO" id="GO:0005829">
    <property type="term" value="C:cytosol"/>
    <property type="evidence" value="ECO:0007669"/>
    <property type="project" value="TreeGrafter"/>
</dbReference>
<dbReference type="GO" id="GO:0062193">
    <property type="term" value="F:D-ribose pyranase activity"/>
    <property type="evidence" value="ECO:0007669"/>
    <property type="project" value="UniProtKB-EC"/>
</dbReference>
<dbReference type="GO" id="GO:0016872">
    <property type="term" value="F:intramolecular lyase activity"/>
    <property type="evidence" value="ECO:0007669"/>
    <property type="project" value="UniProtKB-UniRule"/>
</dbReference>
<dbReference type="GO" id="GO:0048029">
    <property type="term" value="F:monosaccharide binding"/>
    <property type="evidence" value="ECO:0007669"/>
    <property type="project" value="InterPro"/>
</dbReference>
<dbReference type="GO" id="GO:0019303">
    <property type="term" value="P:D-ribose catabolic process"/>
    <property type="evidence" value="ECO:0007669"/>
    <property type="project" value="UniProtKB-UniRule"/>
</dbReference>
<dbReference type="FunFam" id="3.40.1650.10:FF:000004">
    <property type="entry name" value="D-ribose pyranase"/>
    <property type="match status" value="1"/>
</dbReference>
<dbReference type="Gene3D" id="3.40.1650.10">
    <property type="entry name" value="RbsD-like domain"/>
    <property type="match status" value="1"/>
</dbReference>
<dbReference type="HAMAP" id="MF_01661">
    <property type="entry name" value="D_rib_pyranase"/>
    <property type="match status" value="1"/>
</dbReference>
<dbReference type="InterPro" id="IPR023064">
    <property type="entry name" value="D-ribose_pyranase"/>
</dbReference>
<dbReference type="InterPro" id="IPR023750">
    <property type="entry name" value="RbsD-like_sf"/>
</dbReference>
<dbReference type="InterPro" id="IPR007721">
    <property type="entry name" value="RbsD_FucU"/>
</dbReference>
<dbReference type="NCBIfam" id="NF008761">
    <property type="entry name" value="PRK11797.1"/>
    <property type="match status" value="1"/>
</dbReference>
<dbReference type="PANTHER" id="PTHR37831">
    <property type="entry name" value="D-RIBOSE PYRANASE"/>
    <property type="match status" value="1"/>
</dbReference>
<dbReference type="PANTHER" id="PTHR37831:SF1">
    <property type="entry name" value="D-RIBOSE PYRANASE"/>
    <property type="match status" value="1"/>
</dbReference>
<dbReference type="Pfam" id="PF05025">
    <property type="entry name" value="RbsD_FucU"/>
    <property type="match status" value="1"/>
</dbReference>
<dbReference type="SUPFAM" id="SSF102546">
    <property type="entry name" value="RbsD-like"/>
    <property type="match status" value="1"/>
</dbReference>
<name>RBSD_PSEPG</name>